<keyword id="KW-1185">Reference proteome</keyword>
<evidence type="ECO:0000255" key="1">
    <source>
        <dbReference type="HAMAP-Rule" id="MF_00245"/>
    </source>
</evidence>
<name>Y3844_BACCR</name>
<accession>Q819W1</accession>
<comment type="function">
    <text evidence="1">Might take part in the signal recognition particle (SRP) pathway. This is inferred from the conservation of its genetic proximity to ftsY/ffh. May be a regulatory protein.</text>
</comment>
<comment type="similarity">
    <text evidence="1">Belongs to the UPF0122 family.</text>
</comment>
<organism>
    <name type="scientific">Bacillus cereus (strain ATCC 14579 / DSM 31 / CCUG 7414 / JCM 2152 / NBRC 15305 / NCIMB 9373 / NCTC 2599 / NRRL B-3711)</name>
    <dbReference type="NCBI Taxonomy" id="226900"/>
    <lineage>
        <taxon>Bacteria</taxon>
        <taxon>Bacillati</taxon>
        <taxon>Bacillota</taxon>
        <taxon>Bacilli</taxon>
        <taxon>Bacillales</taxon>
        <taxon>Bacillaceae</taxon>
        <taxon>Bacillus</taxon>
        <taxon>Bacillus cereus group</taxon>
    </lineage>
</organism>
<feature type="chain" id="PRO_0000211859" description="UPF0122 protein BC_3844">
    <location>
        <begin position="1"/>
        <end position="110"/>
    </location>
</feature>
<protein>
    <recommendedName>
        <fullName evidence="1">UPF0122 protein BC_3844</fullName>
    </recommendedName>
</protein>
<proteinExistence type="inferred from homology"/>
<dbReference type="EMBL" id="AE016877">
    <property type="protein sequence ID" value="AAP10766.1"/>
    <property type="molecule type" value="Genomic_DNA"/>
</dbReference>
<dbReference type="RefSeq" id="NP_833565.1">
    <property type="nucleotide sequence ID" value="NC_004722.1"/>
</dbReference>
<dbReference type="RefSeq" id="WP_000891062.1">
    <property type="nucleotide sequence ID" value="NZ_CP138336.1"/>
</dbReference>
<dbReference type="SMR" id="Q819W1"/>
<dbReference type="STRING" id="226900.BC_3844"/>
<dbReference type="KEGG" id="bce:BC3844"/>
<dbReference type="PATRIC" id="fig|226900.8.peg.3963"/>
<dbReference type="HOGENOM" id="CLU_129218_1_0_9"/>
<dbReference type="OrthoDB" id="6392at2"/>
<dbReference type="PRO" id="PR:Q819W1"/>
<dbReference type="Proteomes" id="UP000001417">
    <property type="component" value="Chromosome"/>
</dbReference>
<dbReference type="Gene3D" id="1.10.10.10">
    <property type="entry name" value="Winged helix-like DNA-binding domain superfamily/Winged helix DNA-binding domain"/>
    <property type="match status" value="1"/>
</dbReference>
<dbReference type="HAMAP" id="MF_00245">
    <property type="entry name" value="UPF0122"/>
    <property type="match status" value="1"/>
</dbReference>
<dbReference type="InterPro" id="IPR013324">
    <property type="entry name" value="RNA_pol_sigma_r3/r4-like"/>
</dbReference>
<dbReference type="InterPro" id="IPR007394">
    <property type="entry name" value="UPF0122"/>
</dbReference>
<dbReference type="InterPro" id="IPR054831">
    <property type="entry name" value="UPF0122_fam_protein"/>
</dbReference>
<dbReference type="InterPro" id="IPR036388">
    <property type="entry name" value="WH-like_DNA-bd_sf"/>
</dbReference>
<dbReference type="NCBIfam" id="NF001068">
    <property type="entry name" value="PRK00118.1-4"/>
    <property type="match status" value="1"/>
</dbReference>
<dbReference type="NCBIfam" id="NF001070">
    <property type="entry name" value="PRK00118.1-6"/>
    <property type="match status" value="1"/>
</dbReference>
<dbReference type="NCBIfam" id="NF045758">
    <property type="entry name" value="YlxM"/>
    <property type="match status" value="1"/>
</dbReference>
<dbReference type="PANTHER" id="PTHR40083">
    <property type="entry name" value="UPF0122 PROTEIN CBO2450/CLC_2298"/>
    <property type="match status" value="1"/>
</dbReference>
<dbReference type="PANTHER" id="PTHR40083:SF1">
    <property type="entry name" value="UPF0122 PROTEIN YLXM"/>
    <property type="match status" value="1"/>
</dbReference>
<dbReference type="Pfam" id="PF04297">
    <property type="entry name" value="UPF0122"/>
    <property type="match status" value="1"/>
</dbReference>
<dbReference type="SUPFAM" id="SSF88659">
    <property type="entry name" value="Sigma3 and sigma4 domains of RNA polymerase sigma factors"/>
    <property type="match status" value="1"/>
</dbReference>
<reference key="1">
    <citation type="journal article" date="2003" name="Nature">
        <title>Genome sequence of Bacillus cereus and comparative analysis with Bacillus anthracis.</title>
        <authorList>
            <person name="Ivanova N."/>
            <person name="Sorokin A."/>
            <person name="Anderson I."/>
            <person name="Galleron N."/>
            <person name="Candelon B."/>
            <person name="Kapatral V."/>
            <person name="Bhattacharyya A."/>
            <person name="Reznik G."/>
            <person name="Mikhailova N."/>
            <person name="Lapidus A."/>
            <person name="Chu L."/>
            <person name="Mazur M."/>
            <person name="Goltsman E."/>
            <person name="Larsen N."/>
            <person name="D'Souza M."/>
            <person name="Walunas T."/>
            <person name="Grechkin Y."/>
            <person name="Pusch G."/>
            <person name="Haselkorn R."/>
            <person name="Fonstein M."/>
            <person name="Ehrlich S.D."/>
            <person name="Overbeek R."/>
            <person name="Kyrpides N.C."/>
        </authorList>
    </citation>
    <scope>NUCLEOTIDE SEQUENCE [LARGE SCALE GENOMIC DNA]</scope>
    <source>
        <strain>ATCC 14579 / DSM 31 / CCUG 7414 / JCM 2152 / NBRC 15305 / NCIMB 9373 / NCTC 2599 / NRRL B-3711</strain>
    </source>
</reference>
<sequence>MLEKTTRMNYLFDFYQSLLTQKQRSYMSLYYLDDLSLGEIAEEFDVSRQAVYDNIKRTEAMLEEYEEKLVLLQKFQERQRLVAKLKQLISEEEHVNEEMKQVVEAIEKLD</sequence>
<gene>
    <name type="ordered locus">BC_3844</name>
</gene>